<feature type="chain" id="PRO_0000217537" description="Magnesium-protoporphyrin IX monomethyl ester [oxidative] cyclase">
    <location>
        <begin position="1"/>
        <end position="358"/>
    </location>
</feature>
<gene>
    <name evidence="1" type="primary">acsF</name>
    <name type="ordered locus">syc2188_d</name>
</gene>
<protein>
    <recommendedName>
        <fullName evidence="1">Magnesium-protoporphyrin IX monomethyl ester [oxidative] cyclase</fullName>
        <shortName evidence="1">Mg-protoporphyrin IX monomethyl ester oxidative cyclase</shortName>
        <ecNumber evidence="1">1.14.13.81</ecNumber>
    </recommendedName>
</protein>
<reference key="1">
    <citation type="journal article" date="2007" name="Photosyn. Res.">
        <title>Complete nucleotide sequence of the freshwater unicellular cyanobacterium Synechococcus elongatus PCC 6301 chromosome: gene content and organization.</title>
        <authorList>
            <person name="Sugita C."/>
            <person name="Ogata K."/>
            <person name="Shikata M."/>
            <person name="Jikuya H."/>
            <person name="Takano J."/>
            <person name="Furumichi M."/>
            <person name="Kanehisa M."/>
            <person name="Omata T."/>
            <person name="Sugiura M."/>
            <person name="Sugita M."/>
        </authorList>
    </citation>
    <scope>NUCLEOTIDE SEQUENCE [LARGE SCALE GENOMIC DNA]</scope>
    <source>
        <strain>ATCC 27144 / PCC 6301 / SAUG 1402/1</strain>
    </source>
</reference>
<accession>Q5MZZ2</accession>
<proteinExistence type="inferred from homology"/>
<comment type="function">
    <text evidence="1">Catalyzes the formation of the isocyclic ring in chlorophyll biosynthesis. Mediates the cyclase reaction, which results in the formation of divinylprotochlorophyllide (Pchlide) characteristic of all chlorophylls from magnesium-protoporphyrin IX 13-monomethyl ester (MgPMME).</text>
</comment>
<comment type="catalytic activity">
    <reaction evidence="1">
        <text>Mg-protoporphyrin IX 13-monomethyl ester + 3 NADPH + 3 O2 + 2 H(+) = 3,8-divinyl protochlorophyllide a + 3 NADP(+) + 5 H2O</text>
        <dbReference type="Rhea" id="RHEA:33235"/>
        <dbReference type="ChEBI" id="CHEBI:15377"/>
        <dbReference type="ChEBI" id="CHEBI:15378"/>
        <dbReference type="ChEBI" id="CHEBI:15379"/>
        <dbReference type="ChEBI" id="CHEBI:57783"/>
        <dbReference type="ChEBI" id="CHEBI:58349"/>
        <dbReference type="ChEBI" id="CHEBI:58632"/>
        <dbReference type="ChEBI" id="CHEBI:60491"/>
        <dbReference type="EC" id="1.14.13.81"/>
    </reaction>
</comment>
<comment type="cofactor">
    <cofactor evidence="1">
        <name>Fe cation</name>
        <dbReference type="ChEBI" id="CHEBI:24875"/>
    </cofactor>
</comment>
<comment type="pathway">
    <text evidence="1">Porphyrin-containing compound metabolism; chlorophyll biosynthesis (light-independent).</text>
</comment>
<comment type="similarity">
    <text evidence="1">Belongs to the AcsF family.</text>
</comment>
<organism>
    <name type="scientific">Synechococcus sp. (strain ATCC 27144 / PCC 6301 / SAUG 1402/1)</name>
    <name type="common">Anacystis nidulans</name>
    <dbReference type="NCBI Taxonomy" id="269084"/>
    <lineage>
        <taxon>Bacteria</taxon>
        <taxon>Bacillati</taxon>
        <taxon>Cyanobacteriota</taxon>
        <taxon>Cyanophyceae</taxon>
        <taxon>Synechococcales</taxon>
        <taxon>Synechococcaceae</taxon>
        <taxon>Synechococcus</taxon>
    </lineage>
</organism>
<sequence length="358" mass="42120">MVDSLQKPELEELRPGIKAPAKETILTPRFYTTDFEAMAKMDLSPNEDELRAILEEFRADYNRKHFVRTPEFDGSAADMDPETKKVFVEFLEQSCTSEFSGFLLYKELSRRIKNRNPLLAECFELMARDEARHAGFLNKSMSDFDLQLDLGFLTANKKYTYFKPAYIFYATYLSEKIGYWRYITIFRHLEQHPEYRIYPIFKFFENWCQDENRHGDFFDALMKAQPSTVRGFVAKLWCRFFLLAVFATMYIRDVQRKEFYEALGLDAREYDRHVIAKTNETSARVFPVVLDVDHPKFYDRLETCIANNNQLAAIEATSAPKPVKVLRKLPYYLSNGLQLLKLYLVKPLESDVYQPAVR</sequence>
<evidence type="ECO:0000255" key="1">
    <source>
        <dbReference type="HAMAP-Rule" id="MF_01840"/>
    </source>
</evidence>
<name>ACSF_SYNP6</name>
<keyword id="KW-0149">Chlorophyll biosynthesis</keyword>
<keyword id="KW-0408">Iron</keyword>
<keyword id="KW-0479">Metal-binding</keyword>
<keyword id="KW-0521">NADP</keyword>
<keyword id="KW-0560">Oxidoreductase</keyword>
<keyword id="KW-0602">Photosynthesis</keyword>
<dbReference type="EC" id="1.14.13.81" evidence="1"/>
<dbReference type="EMBL" id="AP008231">
    <property type="protein sequence ID" value="BAD80378.1"/>
    <property type="molecule type" value="Genomic_DNA"/>
</dbReference>
<dbReference type="RefSeq" id="WP_011244498.1">
    <property type="nucleotide sequence ID" value="NZ_CP085785.1"/>
</dbReference>
<dbReference type="GeneID" id="72430779"/>
<dbReference type="KEGG" id="syc:syc2188_d"/>
<dbReference type="eggNOG" id="COG1633">
    <property type="taxonomic scope" value="Bacteria"/>
</dbReference>
<dbReference type="UniPathway" id="UPA00670"/>
<dbReference type="Proteomes" id="UP000001175">
    <property type="component" value="Chromosome"/>
</dbReference>
<dbReference type="GO" id="GO:0005506">
    <property type="term" value="F:iron ion binding"/>
    <property type="evidence" value="ECO:0007669"/>
    <property type="project" value="UniProtKB-UniRule"/>
</dbReference>
<dbReference type="GO" id="GO:0048529">
    <property type="term" value="F:magnesium-protoporphyrin IX monomethyl ester (oxidative) cyclase activity"/>
    <property type="evidence" value="ECO:0007669"/>
    <property type="project" value="UniProtKB-UniRule"/>
</dbReference>
<dbReference type="GO" id="GO:0036068">
    <property type="term" value="P:light-independent chlorophyll biosynthetic process"/>
    <property type="evidence" value="ECO:0007669"/>
    <property type="project" value="UniProtKB-UniRule"/>
</dbReference>
<dbReference type="GO" id="GO:0015979">
    <property type="term" value="P:photosynthesis"/>
    <property type="evidence" value="ECO:0007669"/>
    <property type="project" value="UniProtKB-UniRule"/>
</dbReference>
<dbReference type="CDD" id="cd01047">
    <property type="entry name" value="ACSF"/>
    <property type="match status" value="1"/>
</dbReference>
<dbReference type="HAMAP" id="MF_01840">
    <property type="entry name" value="AcsF"/>
    <property type="match status" value="1"/>
</dbReference>
<dbReference type="InterPro" id="IPR008434">
    <property type="entry name" value="AcsF"/>
</dbReference>
<dbReference type="InterPro" id="IPR009078">
    <property type="entry name" value="Ferritin-like_SF"/>
</dbReference>
<dbReference type="InterPro" id="IPR003251">
    <property type="entry name" value="Rr_diiron-bd_dom"/>
</dbReference>
<dbReference type="NCBIfam" id="TIGR02029">
    <property type="entry name" value="AcsF"/>
    <property type="match status" value="1"/>
</dbReference>
<dbReference type="NCBIfam" id="NF010172">
    <property type="entry name" value="PRK13654.1"/>
    <property type="match status" value="1"/>
</dbReference>
<dbReference type="PANTHER" id="PTHR31053">
    <property type="entry name" value="MAGNESIUM-PROTOPORPHYRIN IX MONOMETHYL ESTER [OXIDATIVE] CYCLASE, CHLOROPLASTIC"/>
    <property type="match status" value="1"/>
</dbReference>
<dbReference type="PANTHER" id="PTHR31053:SF2">
    <property type="entry name" value="MAGNESIUM-PROTOPORPHYRIN IX MONOMETHYL ESTER [OXIDATIVE] CYCLASE, CHLOROPLASTIC"/>
    <property type="match status" value="1"/>
</dbReference>
<dbReference type="Pfam" id="PF02915">
    <property type="entry name" value="Rubrerythrin"/>
    <property type="match status" value="1"/>
</dbReference>
<dbReference type="SUPFAM" id="SSF47240">
    <property type="entry name" value="Ferritin-like"/>
    <property type="match status" value="1"/>
</dbReference>